<keyword id="KW-0963">Cytoplasm</keyword>
<keyword id="KW-0413">Isomerase</keyword>
<keyword id="KW-0464">Manganese</keyword>
<keyword id="KW-0479">Metal-binding</keyword>
<proteinExistence type="inferred from homology"/>
<feature type="chain" id="PRO_1000133082" description="Phosphopentomutase">
    <location>
        <begin position="1"/>
        <end position="413"/>
    </location>
</feature>
<feature type="binding site" evidence="1">
    <location>
        <position position="11"/>
    </location>
    <ligand>
        <name>Mn(2+)</name>
        <dbReference type="ChEBI" id="CHEBI:29035"/>
        <label>1</label>
    </ligand>
</feature>
<feature type="binding site" evidence="1">
    <location>
        <position position="306"/>
    </location>
    <ligand>
        <name>Mn(2+)</name>
        <dbReference type="ChEBI" id="CHEBI:29035"/>
        <label>2</label>
    </ligand>
</feature>
<feature type="binding site" evidence="1">
    <location>
        <position position="311"/>
    </location>
    <ligand>
        <name>Mn(2+)</name>
        <dbReference type="ChEBI" id="CHEBI:29035"/>
        <label>2</label>
    </ligand>
</feature>
<feature type="binding site" evidence="1">
    <location>
        <position position="347"/>
    </location>
    <ligand>
        <name>Mn(2+)</name>
        <dbReference type="ChEBI" id="CHEBI:29035"/>
        <label>1</label>
    </ligand>
</feature>
<feature type="binding site" evidence="1">
    <location>
        <position position="348"/>
    </location>
    <ligand>
        <name>Mn(2+)</name>
        <dbReference type="ChEBI" id="CHEBI:29035"/>
        <label>1</label>
    </ligand>
</feature>
<feature type="binding site" evidence="1">
    <location>
        <position position="359"/>
    </location>
    <ligand>
        <name>Mn(2+)</name>
        <dbReference type="ChEBI" id="CHEBI:29035"/>
        <label>2</label>
    </ligand>
</feature>
<name>DEOB_HELPS</name>
<evidence type="ECO:0000255" key="1">
    <source>
        <dbReference type="HAMAP-Rule" id="MF_00740"/>
    </source>
</evidence>
<gene>
    <name evidence="1" type="primary">deoB</name>
    <name type="ordered locus">HPSH_06110</name>
</gene>
<organism>
    <name type="scientific">Helicobacter pylori (strain Shi470)</name>
    <dbReference type="NCBI Taxonomy" id="512562"/>
    <lineage>
        <taxon>Bacteria</taxon>
        <taxon>Pseudomonadati</taxon>
        <taxon>Campylobacterota</taxon>
        <taxon>Epsilonproteobacteria</taxon>
        <taxon>Campylobacterales</taxon>
        <taxon>Helicobacteraceae</taxon>
        <taxon>Helicobacter</taxon>
    </lineage>
</organism>
<dbReference type="EC" id="5.4.2.7" evidence="1"/>
<dbReference type="EMBL" id="CP001072">
    <property type="protein sequence ID" value="ACD48624.1"/>
    <property type="molecule type" value="Genomic_DNA"/>
</dbReference>
<dbReference type="RefSeq" id="WP_001172252.1">
    <property type="nucleotide sequence ID" value="NC_010698.2"/>
</dbReference>
<dbReference type="SMR" id="B2UUU2"/>
<dbReference type="KEGG" id="hps:HPSH_06110"/>
<dbReference type="HOGENOM" id="CLU_053861_0_0_7"/>
<dbReference type="UniPathway" id="UPA00002">
    <property type="reaction ID" value="UER00467"/>
</dbReference>
<dbReference type="GO" id="GO:0005829">
    <property type="term" value="C:cytosol"/>
    <property type="evidence" value="ECO:0007669"/>
    <property type="project" value="TreeGrafter"/>
</dbReference>
<dbReference type="GO" id="GO:0000287">
    <property type="term" value="F:magnesium ion binding"/>
    <property type="evidence" value="ECO:0007669"/>
    <property type="project" value="InterPro"/>
</dbReference>
<dbReference type="GO" id="GO:0030145">
    <property type="term" value="F:manganese ion binding"/>
    <property type="evidence" value="ECO:0007669"/>
    <property type="project" value="UniProtKB-UniRule"/>
</dbReference>
<dbReference type="GO" id="GO:0008973">
    <property type="term" value="F:phosphopentomutase activity"/>
    <property type="evidence" value="ECO:0007669"/>
    <property type="project" value="UniProtKB-UniRule"/>
</dbReference>
<dbReference type="GO" id="GO:0006018">
    <property type="term" value="P:2-deoxyribose 1-phosphate catabolic process"/>
    <property type="evidence" value="ECO:0007669"/>
    <property type="project" value="UniProtKB-UniRule"/>
</dbReference>
<dbReference type="GO" id="GO:0006015">
    <property type="term" value="P:5-phosphoribose 1-diphosphate biosynthetic process"/>
    <property type="evidence" value="ECO:0007669"/>
    <property type="project" value="UniProtKB-UniPathway"/>
</dbReference>
<dbReference type="GO" id="GO:0043094">
    <property type="term" value="P:metabolic compound salvage"/>
    <property type="evidence" value="ECO:0007669"/>
    <property type="project" value="InterPro"/>
</dbReference>
<dbReference type="GO" id="GO:0009117">
    <property type="term" value="P:nucleotide metabolic process"/>
    <property type="evidence" value="ECO:0007669"/>
    <property type="project" value="InterPro"/>
</dbReference>
<dbReference type="CDD" id="cd16009">
    <property type="entry name" value="PPM"/>
    <property type="match status" value="1"/>
</dbReference>
<dbReference type="FunFam" id="3.30.70.1250:FF:000001">
    <property type="entry name" value="Phosphopentomutase"/>
    <property type="match status" value="1"/>
</dbReference>
<dbReference type="Gene3D" id="3.40.720.10">
    <property type="entry name" value="Alkaline Phosphatase, subunit A"/>
    <property type="match status" value="1"/>
</dbReference>
<dbReference type="Gene3D" id="3.30.70.1250">
    <property type="entry name" value="Phosphopentomutase"/>
    <property type="match status" value="1"/>
</dbReference>
<dbReference type="HAMAP" id="MF_00740">
    <property type="entry name" value="Phosphopentomut"/>
    <property type="match status" value="1"/>
</dbReference>
<dbReference type="InterPro" id="IPR017850">
    <property type="entry name" value="Alkaline_phosphatase_core_sf"/>
</dbReference>
<dbReference type="InterPro" id="IPR010045">
    <property type="entry name" value="DeoB"/>
</dbReference>
<dbReference type="InterPro" id="IPR006124">
    <property type="entry name" value="Metalloenzyme"/>
</dbReference>
<dbReference type="InterPro" id="IPR024052">
    <property type="entry name" value="Phosphopentomutase_DeoB_cap_sf"/>
</dbReference>
<dbReference type="NCBIfam" id="TIGR01696">
    <property type="entry name" value="deoB"/>
    <property type="match status" value="1"/>
</dbReference>
<dbReference type="NCBIfam" id="NF003766">
    <property type="entry name" value="PRK05362.1"/>
    <property type="match status" value="1"/>
</dbReference>
<dbReference type="PANTHER" id="PTHR21110">
    <property type="entry name" value="PHOSPHOPENTOMUTASE"/>
    <property type="match status" value="1"/>
</dbReference>
<dbReference type="PANTHER" id="PTHR21110:SF0">
    <property type="entry name" value="PHOSPHOPENTOMUTASE"/>
    <property type="match status" value="1"/>
</dbReference>
<dbReference type="Pfam" id="PF01676">
    <property type="entry name" value="Metalloenzyme"/>
    <property type="match status" value="1"/>
</dbReference>
<dbReference type="PIRSF" id="PIRSF001491">
    <property type="entry name" value="Ppentomutase"/>
    <property type="match status" value="1"/>
</dbReference>
<dbReference type="SUPFAM" id="SSF53649">
    <property type="entry name" value="Alkaline phosphatase-like"/>
    <property type="match status" value="1"/>
</dbReference>
<dbReference type="SUPFAM" id="SSF143856">
    <property type="entry name" value="DeoB insert domain-like"/>
    <property type="match status" value="1"/>
</dbReference>
<comment type="function">
    <text evidence="1">Isomerase that catalyzes the conversion of deoxy-ribose 1-phosphate (dRib-1-P) and ribose 1-phosphate (Rib-1-P) to deoxy-ribose 5-phosphate (dRib-5-P) and ribose 5-phosphate (Rib-5-P), respectively.</text>
</comment>
<comment type="catalytic activity">
    <reaction evidence="1">
        <text>2-deoxy-alpha-D-ribose 1-phosphate = 2-deoxy-D-ribose 5-phosphate</text>
        <dbReference type="Rhea" id="RHEA:27658"/>
        <dbReference type="ChEBI" id="CHEBI:57259"/>
        <dbReference type="ChEBI" id="CHEBI:62877"/>
        <dbReference type="EC" id="5.4.2.7"/>
    </reaction>
</comment>
<comment type="catalytic activity">
    <reaction evidence="1">
        <text>alpha-D-ribose 1-phosphate = D-ribose 5-phosphate</text>
        <dbReference type="Rhea" id="RHEA:18793"/>
        <dbReference type="ChEBI" id="CHEBI:57720"/>
        <dbReference type="ChEBI" id="CHEBI:78346"/>
        <dbReference type="EC" id="5.4.2.7"/>
    </reaction>
</comment>
<comment type="cofactor">
    <cofactor evidence="1">
        <name>Mn(2+)</name>
        <dbReference type="ChEBI" id="CHEBI:29035"/>
    </cofactor>
    <text evidence="1">Binds 2 manganese ions.</text>
</comment>
<comment type="pathway">
    <text evidence="1">Carbohydrate degradation; 2-deoxy-D-ribose 1-phosphate degradation; D-glyceraldehyde 3-phosphate and acetaldehyde from 2-deoxy-alpha-D-ribose 1-phosphate: step 1/2.</text>
</comment>
<comment type="subcellular location">
    <subcellularLocation>
        <location evidence="1">Cytoplasm</location>
    </subcellularLocation>
</comment>
<comment type="similarity">
    <text evidence="1">Belongs to the phosphopentomutase family.</text>
</comment>
<sequence length="413" mass="46338">MQKRVVILLLDSFGIGASEDARDFGDLGANTLGNIAKACFNNLADSNDRNGALKLPYLESLGLGLSALKATNELPLGFESKPNLIGAYAYAQELSSAKDTISGHWEMMGAPVLFEWGYFKDKNNSFPKEILDEIMRKTKIKGYLGNCHASGTEIIKDLGEKHLETLYPIFYTSADSVFQIVAHEEKFGLDNLYALCEEAFQILEPLKIARVIARPFIGANREDFKRTAHRKDYAIKPHKKLLFEKFIEEKQGEVISIGKIADIYAHVGITQKFKAGSLMELCDVTLEQIKNAKNNSLIFTNFVHFDSDYGHRRDISGYANALEYFDARLKEVLENLRENDLLILCADHGCDPSFKGTDHTREYIPVLFYHKDLQPAFLGKSESFADIGQSIAYFLGLSPLDYGKNLLNFKGQS</sequence>
<protein>
    <recommendedName>
        <fullName evidence="1">Phosphopentomutase</fullName>
        <ecNumber evidence="1">5.4.2.7</ecNumber>
    </recommendedName>
    <alternativeName>
        <fullName evidence="1">Phosphodeoxyribomutase</fullName>
    </alternativeName>
</protein>
<reference key="1">
    <citation type="submission" date="2008-05" db="EMBL/GenBank/DDBJ databases">
        <title>Genome sequence of Helicobacter pylori from the remote Amazon: traces of Asian ancestry of the first Americans.</title>
        <authorList>
            <person name="Kersulyte D."/>
            <person name="Kalia A."/>
            <person name="Gilman R.H."/>
            <person name="Berg D.E."/>
        </authorList>
    </citation>
    <scope>NUCLEOTIDE SEQUENCE [LARGE SCALE GENOMIC DNA]</scope>
    <source>
        <strain>Shi470</strain>
    </source>
</reference>
<accession>B2UUU2</accession>